<name>PORTL_BPN15</name>
<proteinExistence type="inferred from homology"/>
<reference key="1">
    <citation type="journal article" date="2000" name="J. Mol. Biol.">
        <title>Genomic sequence and analysis of the atypical temperate bacteriophage N15.</title>
        <authorList>
            <person name="Ravin V."/>
            <person name="Ravin N."/>
            <person name="Casjens S."/>
            <person name="Ford M.E."/>
            <person name="Hatfull G.F."/>
            <person name="Hendrix R.W."/>
        </authorList>
    </citation>
    <scope>NUCLEOTIDE SEQUENCE [LARGE SCALE GENOMIC DNA]</scope>
    <scope>IDENTIFICATION</scope>
</reference>
<accession>O64319</accession>
<organism evidence="3">
    <name type="scientific">Escherichia phage N15</name>
    <name type="common">Bacteriophage N15</name>
    <dbReference type="NCBI Taxonomy" id="1604876"/>
    <lineage>
        <taxon>Viruses</taxon>
        <taxon>Duplodnaviria</taxon>
        <taxon>Heunggongvirae</taxon>
        <taxon>Uroviricota</taxon>
        <taxon>Caudoviricetes</taxon>
        <taxon>Ravinvirus</taxon>
        <taxon>Ravinvirus N15</taxon>
    </lineage>
</organism>
<comment type="function">
    <text evidence="1">Forms the portal vertex of the capsid. This portal plays critical roles in head assembly, genome packaging, neck/tail attachment, and genome ejection. The portal protein multimerizes as a single ring-shaped homododecamer arranged around a central channel. Binds to the terminase subunits to form the packaging machine.</text>
</comment>
<comment type="subunit">
    <text evidence="1">Homododecamer. Interacts with the terminase complex composed of two small and one large terminase subunits.</text>
</comment>
<comment type="subcellular location">
    <subcellularLocation>
        <location evidence="1">Virion</location>
    </subcellularLocation>
</comment>
<comment type="PTM">
    <text evidence="1">Proteolytically cleaved by the viral protease during capsid maturation.</text>
</comment>
<comment type="similarity">
    <text evidence="1">Belongs to the siphoviridae portal protein family.</text>
</comment>
<keyword id="KW-0167">Capsid protein</keyword>
<keyword id="KW-0238">DNA-binding</keyword>
<keyword id="KW-1185">Reference proteome</keyword>
<keyword id="KW-0118">Viral capsid assembly</keyword>
<keyword id="KW-1171">Viral genome ejection through host cell envelope</keyword>
<keyword id="KW-0231">Viral genome packaging</keyword>
<keyword id="KW-1243">Viral long flexible tail ejection system</keyword>
<keyword id="KW-1162">Viral penetration into host cytoplasm</keyword>
<keyword id="KW-1188">Viral release from host cell</keyword>
<keyword id="KW-0946">Virion</keyword>
<keyword id="KW-1160">Virus entry into host cell</keyword>
<sequence>MKIPSLVGPDGKTSLREYAGYHGGGGGFGGQLRGWNPPSESADAALLPNYSRGNARADDLVRNNGYAANAVQLHQDHIVGSFFRLSYRPSWRYLGINEEDSRAFSRDVEAAWNEYAEDDFCGIDAERKRTFTMMIREGVAMHAFNGELCVQATWDSDSTRLFRTQFKMVSPKRVSNPNNIGDTRNCRAGVKINDSGAALGYYVSDDGYPGWMAQNWTYIPRELPGGRPSFIHVFEPMEDGQTRGANAFYSVMEQMKMLDTLQNTQLQSAIVKAMYAATIESELDTQSAMDFILGADNKEQQSKLTGWLGEMAAYYSAAPVRLGGARVPHLLPGDSLNLQSAQDTDNGYSTFEQSLLRYIAAGLGVSYEQLSRNYSQMSYSTARASANESWAYFMGRRKFVASRQACQMFLCWLEEAIVRRVVTLPSKARFSFQEARTAWGNANWIGSGRMAIDGLKEVQEAVMLIEAGLSTYEKECAKRGDDYQEIFAQQVRESMERRAAGLNPPAWAAAAFEAGVKKSNEEEQDGARAA</sequence>
<feature type="chain" id="PRO_0000432542" description="Portal protein" evidence="1">
    <location>
        <begin position="1"/>
        <end position="530"/>
    </location>
</feature>
<feature type="chain" id="PRO_0000446428" description="Protein B*" evidence="1">
    <location>
        <begin position="20"/>
        <end position="530"/>
    </location>
</feature>
<feature type="site" description="Cleavage; by viral protease" evidence="1">
    <location>
        <begin position="19"/>
        <end position="20"/>
    </location>
</feature>
<evidence type="ECO:0000255" key="1">
    <source>
        <dbReference type="HAMAP-Rule" id="MF_04135"/>
    </source>
</evidence>
<evidence type="ECO:0000312" key="2">
    <source>
        <dbReference type="EMBL" id="AAC19040.1"/>
    </source>
</evidence>
<evidence type="ECO:0000312" key="3">
    <source>
        <dbReference type="Proteomes" id="UP000002132"/>
    </source>
</evidence>
<protein>
    <recommendedName>
        <fullName evidence="1">Portal protein</fullName>
    </recommendedName>
    <component>
        <recommendedName>
            <fullName evidence="1">Protein B*</fullName>
        </recommendedName>
    </component>
</protein>
<gene>
    <name evidence="2" type="primary">gene 4</name>
</gene>
<dbReference type="EMBL" id="AF064539">
    <property type="protein sequence ID" value="AAC19040.1"/>
    <property type="molecule type" value="Genomic_DNA"/>
</dbReference>
<dbReference type="PIR" id="T13090">
    <property type="entry name" value="T13090"/>
</dbReference>
<dbReference type="RefSeq" id="NP_046899.1">
    <property type="nucleotide sequence ID" value="NC_001901.1"/>
</dbReference>
<dbReference type="SMR" id="O64319"/>
<dbReference type="GeneID" id="1261643"/>
<dbReference type="KEGG" id="vg:1261643"/>
<dbReference type="Proteomes" id="UP000002132">
    <property type="component" value="Genome"/>
</dbReference>
<dbReference type="GO" id="GO:0046798">
    <property type="term" value="C:viral portal complex"/>
    <property type="evidence" value="ECO:0007669"/>
    <property type="project" value="UniProtKB-UniRule"/>
</dbReference>
<dbReference type="GO" id="GO:0003677">
    <property type="term" value="F:DNA binding"/>
    <property type="evidence" value="ECO:0007669"/>
    <property type="project" value="UniProtKB-KW"/>
</dbReference>
<dbReference type="GO" id="GO:0005198">
    <property type="term" value="F:structural molecule activity"/>
    <property type="evidence" value="ECO:0007669"/>
    <property type="project" value="UniProtKB-UniRule"/>
</dbReference>
<dbReference type="GO" id="GO:0099001">
    <property type="term" value="P:symbiont genome ejection through host cell envelope, long flexible tail mechanism"/>
    <property type="evidence" value="ECO:0007669"/>
    <property type="project" value="UniProtKB-KW"/>
</dbReference>
<dbReference type="GO" id="GO:0019068">
    <property type="term" value="P:virion assembly"/>
    <property type="evidence" value="ECO:0007669"/>
    <property type="project" value="UniProtKB-UniRule"/>
</dbReference>
<dbReference type="HAMAP" id="MF_04135">
    <property type="entry name" value="PORTAL_LAMBDA"/>
    <property type="match status" value="1"/>
</dbReference>
<dbReference type="InterPro" id="IPR006429">
    <property type="entry name" value="Phage_lambda_portal"/>
</dbReference>
<dbReference type="NCBIfam" id="TIGR01539">
    <property type="entry name" value="portal_lambda"/>
    <property type="match status" value="1"/>
</dbReference>
<dbReference type="Pfam" id="PF05136">
    <property type="entry name" value="Phage_portal_2"/>
    <property type="match status" value="1"/>
</dbReference>
<organismHost>
    <name type="scientific">Escherichia coli</name>
    <dbReference type="NCBI Taxonomy" id="562"/>
</organismHost>